<accession>Q6LMK1</accession>
<sequence length="234" mass="26362">MKFDPPLQSATLIKRYKRFLTDIELPDGEIRTIHCANTGAMTGCAEPGNTVWFSTSENKKRKYPNSWELAETANGHWICVNTAQANRLVVEAINAGTITELQGYSSLRTEVKYGSENSRIDILLEDKNKPVCYIEVKSVTLLDNGQGFFPDAVTTRGQKHLRELIEVAQNGQRSVLFFAILHSGIENVSAAHHIDPDYYRLIKQAEQAGVEIICYKATLNQDEIKLNHCMNFNQ</sequence>
<dbReference type="EMBL" id="CR378673">
    <property type="protein sequence ID" value="CAG21476.1"/>
    <property type="molecule type" value="Genomic_DNA"/>
</dbReference>
<dbReference type="RefSeq" id="WP_011219730.1">
    <property type="nucleotide sequence ID" value="NC_006370.1"/>
</dbReference>
<dbReference type="SMR" id="Q6LMK1"/>
<dbReference type="STRING" id="298386.PBPRA3170"/>
<dbReference type="KEGG" id="ppr:PBPRA3170"/>
<dbReference type="eggNOG" id="COG1489">
    <property type="taxonomic scope" value="Bacteria"/>
</dbReference>
<dbReference type="HOGENOM" id="CLU_052299_2_0_6"/>
<dbReference type="Proteomes" id="UP000000593">
    <property type="component" value="Chromosome 1"/>
</dbReference>
<dbReference type="GO" id="GO:0003677">
    <property type="term" value="F:DNA binding"/>
    <property type="evidence" value="ECO:0007669"/>
    <property type="project" value="InterPro"/>
</dbReference>
<dbReference type="CDD" id="cd22359">
    <property type="entry name" value="SfsA-like_bacterial"/>
    <property type="match status" value="1"/>
</dbReference>
<dbReference type="FunFam" id="2.40.50.580:FF:000001">
    <property type="entry name" value="Sugar fermentation stimulation protein A"/>
    <property type="match status" value="1"/>
</dbReference>
<dbReference type="FunFam" id="3.40.1350.60:FF:000001">
    <property type="entry name" value="Sugar fermentation stimulation protein A"/>
    <property type="match status" value="1"/>
</dbReference>
<dbReference type="Gene3D" id="2.40.50.580">
    <property type="match status" value="1"/>
</dbReference>
<dbReference type="Gene3D" id="3.40.1350.60">
    <property type="match status" value="1"/>
</dbReference>
<dbReference type="HAMAP" id="MF_00095">
    <property type="entry name" value="SfsA"/>
    <property type="match status" value="1"/>
</dbReference>
<dbReference type="InterPro" id="IPR005224">
    <property type="entry name" value="SfsA"/>
</dbReference>
<dbReference type="InterPro" id="IPR040452">
    <property type="entry name" value="SfsA_C"/>
</dbReference>
<dbReference type="InterPro" id="IPR041465">
    <property type="entry name" value="SfsA_N"/>
</dbReference>
<dbReference type="NCBIfam" id="TIGR00230">
    <property type="entry name" value="sfsA"/>
    <property type="match status" value="1"/>
</dbReference>
<dbReference type="PANTHER" id="PTHR30545">
    <property type="entry name" value="SUGAR FERMENTATION STIMULATION PROTEIN A"/>
    <property type="match status" value="1"/>
</dbReference>
<dbReference type="PANTHER" id="PTHR30545:SF2">
    <property type="entry name" value="SUGAR FERMENTATION STIMULATION PROTEIN A"/>
    <property type="match status" value="1"/>
</dbReference>
<dbReference type="Pfam" id="PF03749">
    <property type="entry name" value="SfsA"/>
    <property type="match status" value="1"/>
</dbReference>
<dbReference type="Pfam" id="PF17746">
    <property type="entry name" value="SfsA_N"/>
    <property type="match status" value="1"/>
</dbReference>
<protein>
    <recommendedName>
        <fullName evidence="1">Sugar fermentation stimulation protein homolog</fullName>
    </recommendedName>
</protein>
<organism>
    <name type="scientific">Photobacterium profundum (strain SS9)</name>
    <dbReference type="NCBI Taxonomy" id="298386"/>
    <lineage>
        <taxon>Bacteria</taxon>
        <taxon>Pseudomonadati</taxon>
        <taxon>Pseudomonadota</taxon>
        <taxon>Gammaproteobacteria</taxon>
        <taxon>Vibrionales</taxon>
        <taxon>Vibrionaceae</taxon>
        <taxon>Photobacterium</taxon>
    </lineage>
</organism>
<reference key="1">
    <citation type="journal article" date="2005" name="Science">
        <title>Life at depth: Photobacterium profundum genome sequence and expression analysis.</title>
        <authorList>
            <person name="Vezzi A."/>
            <person name="Campanaro S."/>
            <person name="D'Angelo M."/>
            <person name="Simonato F."/>
            <person name="Vitulo N."/>
            <person name="Lauro F.M."/>
            <person name="Cestaro A."/>
            <person name="Malacrida G."/>
            <person name="Simionati B."/>
            <person name="Cannata N."/>
            <person name="Romualdi C."/>
            <person name="Bartlett D.H."/>
            <person name="Valle G."/>
        </authorList>
    </citation>
    <scope>NUCLEOTIDE SEQUENCE [LARGE SCALE GENOMIC DNA]</scope>
    <source>
        <strain>ATCC BAA-1253 / SS9</strain>
    </source>
</reference>
<comment type="similarity">
    <text evidence="1">Belongs to the SfsA family.</text>
</comment>
<gene>
    <name evidence="1" type="primary">sfsA</name>
    <name type="ordered locus">PBPRA3170</name>
</gene>
<proteinExistence type="inferred from homology"/>
<feature type="chain" id="PRO_0000152294" description="Sugar fermentation stimulation protein homolog">
    <location>
        <begin position="1"/>
        <end position="234"/>
    </location>
</feature>
<keyword id="KW-1185">Reference proteome</keyword>
<name>SFSA_PHOPR</name>
<evidence type="ECO:0000255" key="1">
    <source>
        <dbReference type="HAMAP-Rule" id="MF_00095"/>
    </source>
</evidence>